<gene>
    <name evidence="1" type="primary">rplR</name>
    <name type="ordered locus">Gmet_0642</name>
</gene>
<evidence type="ECO:0000255" key="1">
    <source>
        <dbReference type="HAMAP-Rule" id="MF_01337"/>
    </source>
</evidence>
<evidence type="ECO:0000305" key="2"/>
<reference key="1">
    <citation type="journal article" date="2009" name="BMC Microbiol.">
        <title>The genome sequence of Geobacter metallireducens: features of metabolism, physiology and regulation common and dissimilar to Geobacter sulfurreducens.</title>
        <authorList>
            <person name="Aklujkar M."/>
            <person name="Krushkal J."/>
            <person name="DiBartolo G."/>
            <person name="Lapidus A."/>
            <person name="Land M.L."/>
            <person name="Lovley D.R."/>
        </authorList>
    </citation>
    <scope>NUCLEOTIDE SEQUENCE [LARGE SCALE GENOMIC DNA]</scope>
    <source>
        <strain>ATCC 53774 / DSM 7210 / GS-15</strain>
    </source>
</reference>
<accession>Q39XZ0</accession>
<sequence length="121" mass="13361">MSPLAQKKVAHLKRKTRVRKKIRGTTDRPRLNVYKSARHIYAQIIDDVTGVTLVSASTVQDESDALKYTGNVEAAKCVGAMVAKKALEKNITSVVFDRNGFLYHGRVKALADSARENGLSF</sequence>
<protein>
    <recommendedName>
        <fullName evidence="1">Large ribosomal subunit protein uL18</fullName>
    </recommendedName>
    <alternativeName>
        <fullName evidence="2">50S ribosomal protein L18</fullName>
    </alternativeName>
</protein>
<proteinExistence type="inferred from homology"/>
<organism>
    <name type="scientific">Geobacter metallireducens (strain ATCC 53774 / DSM 7210 / GS-15)</name>
    <dbReference type="NCBI Taxonomy" id="269799"/>
    <lineage>
        <taxon>Bacteria</taxon>
        <taxon>Pseudomonadati</taxon>
        <taxon>Thermodesulfobacteriota</taxon>
        <taxon>Desulfuromonadia</taxon>
        <taxon>Geobacterales</taxon>
        <taxon>Geobacteraceae</taxon>
        <taxon>Geobacter</taxon>
    </lineage>
</organism>
<name>RL18_GEOMG</name>
<comment type="function">
    <text evidence="1">This is one of the proteins that bind and probably mediate the attachment of the 5S RNA into the large ribosomal subunit, where it forms part of the central protuberance.</text>
</comment>
<comment type="subunit">
    <text evidence="1">Part of the 50S ribosomal subunit; part of the 5S rRNA/L5/L18/L25 subcomplex. Contacts the 5S and 23S rRNAs.</text>
</comment>
<comment type="similarity">
    <text evidence="1">Belongs to the universal ribosomal protein uL18 family.</text>
</comment>
<feature type="chain" id="PRO_0000251316" description="Large ribosomal subunit protein uL18">
    <location>
        <begin position="1"/>
        <end position="121"/>
    </location>
</feature>
<keyword id="KW-1185">Reference proteome</keyword>
<keyword id="KW-0687">Ribonucleoprotein</keyword>
<keyword id="KW-0689">Ribosomal protein</keyword>
<keyword id="KW-0694">RNA-binding</keyword>
<keyword id="KW-0699">rRNA-binding</keyword>
<dbReference type="EMBL" id="CP000148">
    <property type="protein sequence ID" value="ABB30884.1"/>
    <property type="molecule type" value="Genomic_DNA"/>
</dbReference>
<dbReference type="RefSeq" id="WP_004514252.1">
    <property type="nucleotide sequence ID" value="NC_007517.1"/>
</dbReference>
<dbReference type="SMR" id="Q39XZ0"/>
<dbReference type="STRING" id="269799.Gmet_0642"/>
<dbReference type="KEGG" id="gme:Gmet_0642"/>
<dbReference type="eggNOG" id="COG0256">
    <property type="taxonomic scope" value="Bacteria"/>
</dbReference>
<dbReference type="HOGENOM" id="CLU_098841_0_1_7"/>
<dbReference type="Proteomes" id="UP000007073">
    <property type="component" value="Chromosome"/>
</dbReference>
<dbReference type="GO" id="GO:0022625">
    <property type="term" value="C:cytosolic large ribosomal subunit"/>
    <property type="evidence" value="ECO:0007669"/>
    <property type="project" value="TreeGrafter"/>
</dbReference>
<dbReference type="GO" id="GO:0008097">
    <property type="term" value="F:5S rRNA binding"/>
    <property type="evidence" value="ECO:0007669"/>
    <property type="project" value="TreeGrafter"/>
</dbReference>
<dbReference type="GO" id="GO:0003735">
    <property type="term" value="F:structural constituent of ribosome"/>
    <property type="evidence" value="ECO:0007669"/>
    <property type="project" value="InterPro"/>
</dbReference>
<dbReference type="GO" id="GO:0006412">
    <property type="term" value="P:translation"/>
    <property type="evidence" value="ECO:0007669"/>
    <property type="project" value="UniProtKB-UniRule"/>
</dbReference>
<dbReference type="CDD" id="cd00432">
    <property type="entry name" value="Ribosomal_L18_L5e"/>
    <property type="match status" value="1"/>
</dbReference>
<dbReference type="FunFam" id="3.30.420.100:FF:000001">
    <property type="entry name" value="50S ribosomal protein L18"/>
    <property type="match status" value="1"/>
</dbReference>
<dbReference type="Gene3D" id="3.30.420.100">
    <property type="match status" value="1"/>
</dbReference>
<dbReference type="HAMAP" id="MF_01337_B">
    <property type="entry name" value="Ribosomal_uL18_B"/>
    <property type="match status" value="1"/>
</dbReference>
<dbReference type="InterPro" id="IPR004389">
    <property type="entry name" value="Ribosomal_uL18_bac-type"/>
</dbReference>
<dbReference type="InterPro" id="IPR005484">
    <property type="entry name" value="Ribosomal_uL18_bac/euk"/>
</dbReference>
<dbReference type="NCBIfam" id="TIGR00060">
    <property type="entry name" value="L18_bact"/>
    <property type="match status" value="1"/>
</dbReference>
<dbReference type="PANTHER" id="PTHR12899">
    <property type="entry name" value="39S RIBOSOMAL PROTEIN L18, MITOCHONDRIAL"/>
    <property type="match status" value="1"/>
</dbReference>
<dbReference type="PANTHER" id="PTHR12899:SF3">
    <property type="entry name" value="LARGE RIBOSOMAL SUBUNIT PROTEIN UL18M"/>
    <property type="match status" value="1"/>
</dbReference>
<dbReference type="Pfam" id="PF00861">
    <property type="entry name" value="Ribosomal_L18p"/>
    <property type="match status" value="1"/>
</dbReference>
<dbReference type="SUPFAM" id="SSF53137">
    <property type="entry name" value="Translational machinery components"/>
    <property type="match status" value="1"/>
</dbReference>